<keyword id="KW-0963">Cytoplasm</keyword>
<keyword id="KW-0539">Nucleus</keyword>
<keyword id="KW-0597">Phosphoprotein</keyword>
<keyword id="KW-1185">Reference proteome</keyword>
<keyword id="KW-0804">Transcription</keyword>
<keyword id="KW-0805">Transcription regulation</keyword>
<evidence type="ECO:0000250" key="1">
    <source>
        <dbReference type="UniProtKB" id="Q02939"/>
    </source>
</evidence>
<evidence type="ECO:0000269" key="2">
    <source>
    </source>
</evidence>
<evidence type="ECO:0000269" key="3">
    <source>
    </source>
</evidence>
<evidence type="ECO:0000269" key="4">
    <source>
    </source>
</evidence>
<evidence type="ECO:0000269" key="5">
    <source>
    </source>
</evidence>
<evidence type="ECO:0000303" key="6">
    <source>
    </source>
</evidence>
<evidence type="ECO:0007744" key="7">
    <source>
    </source>
</evidence>
<evidence type="ECO:0007744" key="8">
    <source>
    </source>
</evidence>
<comment type="function">
    <text evidence="1 5">Component of the general transcription and DNA repair factor IIH (TFIIH) core complex, which is involved in general and transcription-coupled nucleotide excision repair (NER) of damaged DNA and, when complexed to TFIIK, in RNA transcription by RNA polymerase II. In NER, TFIIH acts by opening DNA around the lesion to allow the excision of the damaged oligonucleotide and its replacement by a new DNA fragment. In transcription, TFIIH has an essential role in transcription initiation. When the pre-initiation complex (PIC) has been established, TFIIH is required for promoter opening and promoter escape. Phosphorylation of the C-terminal tail (CTD) of the largest subunit of RNA polymerase II by the kinase module TFIIK controls the initiation of transcription (By similarity). TFB6 facilitates dissociation of the SSL2 helicase from TFIIH after transcription initiation (PubMed:22411836).</text>
</comment>
<comment type="subunit">
    <text evidence="5">Component of the general transcription factor TFIIH, composed of a 7-subunit TFIIH core complex composed of XPB/SSL2, XPD/RAD3, SSL1, TFB1, TFB2, TFB4 and TFB5 which is active in NER; the 3-subunit CTD-kinase module TFIIK composed of CCL1, KIN28, and TFB3 which is active in transcription; as well as TFB6 that regulates SSL2 association with the complex.</text>
</comment>
<comment type="subcellular location">
    <subcellularLocation>
        <location evidence="2">Cytoplasm</location>
    </subcellularLocation>
    <subcellularLocation>
        <location evidence="2">Nucleus</location>
    </subcellularLocation>
</comment>
<comment type="induction">
    <text evidence="4">Expression is positively regulated by ARG5,6.</text>
</comment>
<comment type="PTM">
    <text evidence="5">Phosphorylation leads the dissociation of from SSL2.</text>
</comment>
<comment type="disruption phenotype">
    <text evidence="5">Prevents the dissociation of SSL2 from TFIIH after transcrition initiation.</text>
</comment>
<comment type="miscellaneous">
    <text evidence="3">Present with 3510 molecules/cell in log phase SD medium.</text>
</comment>
<organism>
    <name type="scientific">Saccharomyces cerevisiae (strain ATCC 204508 / S288c)</name>
    <name type="common">Baker's yeast</name>
    <dbReference type="NCBI Taxonomy" id="559292"/>
    <lineage>
        <taxon>Eukaryota</taxon>
        <taxon>Fungi</taxon>
        <taxon>Dikarya</taxon>
        <taxon>Ascomycota</taxon>
        <taxon>Saccharomycotina</taxon>
        <taxon>Saccharomycetes</taxon>
        <taxon>Saccharomycetales</taxon>
        <taxon>Saccharomycetaceae</taxon>
        <taxon>Saccharomyces</taxon>
    </lineage>
</organism>
<sequence>MSEPNTPLHAQPNEQLDLNNLNDLDEKDIDDLNLDPNSDVEISADSGDVVNSNIDNVIWQRNCNKKRRYHTPEFNDVYNETNNTINDVTMLDDVDDFQPRINVSSPFSSATKLSELLPNDHNGTSHPRRLSMSQQSKFISYVDDQLLQIQRKFVQSRGLNIKNGYASLTPLLQDLKTLVDFVWYSIAHVPNSDYLLQSEEKRHCPDSRNPKDTCGYSSYFGQGSYLIKIADDLIDYVEKFTFKNMEDSEINDTLSKLFKLFFILDRIFVILTDDNDNCKEVPKTSSASKNIAGLNGTDIVRLKGIAERTRVRLPIFLESQGIHGYHYELSKIYEGFLDHANSF</sequence>
<accession>Q08816</accession>
<accession>D6W347</accession>
<protein>
    <recommendedName>
        <fullName evidence="6">General transcription and DNA repair factor IIH subunit TFB6</fullName>
        <shortName evidence="6">TFIIH subunit TFB6</shortName>
    </recommendedName>
</protein>
<gene>
    <name evidence="6" type="primary">TFB6</name>
    <name type="ordered locus">YOR352W</name>
</gene>
<proteinExistence type="evidence at protein level"/>
<name>TFB6_YEAST</name>
<feature type="chain" id="PRO_0000245290" description="General transcription and DNA repair factor IIH subunit TFB6">
    <location>
        <begin position="1"/>
        <end position="343"/>
    </location>
</feature>
<feature type="modified residue" description="Phosphotyrosine" evidence="8">
    <location>
        <position position="69"/>
    </location>
</feature>
<feature type="modified residue" description="Phosphothreonine" evidence="5">
    <location>
        <position position="71"/>
    </location>
</feature>
<feature type="modified residue" description="Phosphothreonine" evidence="5">
    <location>
        <position position="84"/>
    </location>
</feature>
<feature type="modified residue" description="Phosphoserine" evidence="5">
    <location>
        <position position="104"/>
    </location>
</feature>
<feature type="modified residue" description="Phosphoserine" evidence="5 8">
    <location>
        <position position="105"/>
    </location>
</feature>
<feature type="modified residue" description="Phosphoserine" evidence="8">
    <location>
        <position position="108"/>
    </location>
</feature>
<feature type="modified residue" description="Phosphoserine" evidence="7">
    <location>
        <position position="342"/>
    </location>
</feature>
<dbReference type="EMBL" id="Z75260">
    <property type="protein sequence ID" value="CAA99681.1"/>
    <property type="molecule type" value="Genomic_DNA"/>
</dbReference>
<dbReference type="EMBL" id="BK006948">
    <property type="protein sequence ID" value="DAA11113.1"/>
    <property type="molecule type" value="Genomic_DNA"/>
</dbReference>
<dbReference type="PIR" id="S67264">
    <property type="entry name" value="S67264"/>
</dbReference>
<dbReference type="RefSeq" id="NP_014997.1">
    <property type="nucleotide sequence ID" value="NM_001183772.1"/>
</dbReference>
<dbReference type="SMR" id="Q08816"/>
<dbReference type="BioGRID" id="34737">
    <property type="interactions" value="60"/>
</dbReference>
<dbReference type="ComplexPortal" id="CPX-1659">
    <property type="entry name" value="General transcription factor TFIIH complex"/>
</dbReference>
<dbReference type="DIP" id="DIP-5639N"/>
<dbReference type="FunCoup" id="Q08816">
    <property type="interactions" value="28"/>
</dbReference>
<dbReference type="IntAct" id="Q08816">
    <property type="interactions" value="11"/>
</dbReference>
<dbReference type="MINT" id="Q08816"/>
<dbReference type="STRING" id="4932.YOR352W"/>
<dbReference type="iPTMnet" id="Q08816"/>
<dbReference type="PaxDb" id="4932-YOR352W"/>
<dbReference type="PeptideAtlas" id="Q08816"/>
<dbReference type="EnsemblFungi" id="YOR352W_mRNA">
    <property type="protein sequence ID" value="YOR352W"/>
    <property type="gene ID" value="YOR352W"/>
</dbReference>
<dbReference type="GeneID" id="854534"/>
<dbReference type="KEGG" id="sce:YOR352W"/>
<dbReference type="AGR" id="SGD:S000005879"/>
<dbReference type="SGD" id="S000005879">
    <property type="gene designation" value="TFB6"/>
</dbReference>
<dbReference type="VEuPathDB" id="FungiDB:YOR352W"/>
<dbReference type="eggNOG" id="ENOG502QZN7">
    <property type="taxonomic scope" value="Eukaryota"/>
</dbReference>
<dbReference type="HOGENOM" id="CLU_061844_0_0_1"/>
<dbReference type="InParanoid" id="Q08816"/>
<dbReference type="OMA" id="DFIWYSI"/>
<dbReference type="OrthoDB" id="2567806at2759"/>
<dbReference type="BioCyc" id="YEAST:G3O-33823-MONOMER"/>
<dbReference type="BioGRID-ORCS" id="854534">
    <property type="hits" value="0 hits in 10 CRISPR screens"/>
</dbReference>
<dbReference type="PRO" id="PR:Q08816"/>
<dbReference type="Proteomes" id="UP000002311">
    <property type="component" value="Chromosome XV"/>
</dbReference>
<dbReference type="RNAct" id="Q08816">
    <property type="molecule type" value="protein"/>
</dbReference>
<dbReference type="GO" id="GO:0005737">
    <property type="term" value="C:cytoplasm"/>
    <property type="evidence" value="ECO:0007005"/>
    <property type="project" value="SGD"/>
</dbReference>
<dbReference type="GO" id="GO:0005634">
    <property type="term" value="C:nucleus"/>
    <property type="evidence" value="ECO:0007005"/>
    <property type="project" value="SGD"/>
</dbReference>
<dbReference type="GO" id="GO:0005675">
    <property type="term" value="C:transcription factor TFIIH holo complex"/>
    <property type="evidence" value="ECO:0000314"/>
    <property type="project" value="SGD"/>
</dbReference>
<dbReference type="GO" id="GO:0006289">
    <property type="term" value="P:nucleotide-excision repair"/>
    <property type="evidence" value="ECO:0000314"/>
    <property type="project" value="ComplexPortal"/>
</dbReference>
<dbReference type="GO" id="GO:0006367">
    <property type="term" value="P:transcription initiation at RNA polymerase II promoter"/>
    <property type="evidence" value="ECO:0000314"/>
    <property type="project" value="ComplexPortal"/>
</dbReference>
<dbReference type="InterPro" id="IPR031349">
    <property type="entry name" value="Tfb6"/>
</dbReference>
<dbReference type="PANTHER" id="PTHR37781:SF1">
    <property type="entry name" value="ADR380WP"/>
    <property type="match status" value="1"/>
</dbReference>
<dbReference type="PANTHER" id="PTHR37781">
    <property type="entry name" value="TFIIH COMPLEX SUBUNIT"/>
    <property type="match status" value="1"/>
</dbReference>
<dbReference type="Pfam" id="PF17110">
    <property type="entry name" value="TFB6"/>
    <property type="match status" value="1"/>
</dbReference>
<reference key="1">
    <citation type="journal article" date="1997" name="Nature">
        <title>The nucleotide sequence of Saccharomyces cerevisiae chromosome XV.</title>
        <authorList>
            <person name="Dujon B."/>
            <person name="Albermann K."/>
            <person name="Aldea M."/>
            <person name="Alexandraki D."/>
            <person name="Ansorge W."/>
            <person name="Arino J."/>
            <person name="Benes V."/>
            <person name="Bohn C."/>
            <person name="Bolotin-Fukuhara M."/>
            <person name="Bordonne R."/>
            <person name="Boyer J."/>
            <person name="Camasses A."/>
            <person name="Casamayor A."/>
            <person name="Casas C."/>
            <person name="Cheret G."/>
            <person name="Cziepluch C."/>
            <person name="Daignan-Fornier B."/>
            <person name="Dang V.-D."/>
            <person name="de Haan M."/>
            <person name="Delius H."/>
            <person name="Durand P."/>
            <person name="Fairhead C."/>
            <person name="Feldmann H."/>
            <person name="Gaillon L."/>
            <person name="Galisson F."/>
            <person name="Gamo F.-J."/>
            <person name="Gancedo C."/>
            <person name="Goffeau A."/>
            <person name="Goulding S.E."/>
            <person name="Grivell L.A."/>
            <person name="Habbig B."/>
            <person name="Hand N.J."/>
            <person name="Hani J."/>
            <person name="Hattenhorst U."/>
            <person name="Hebling U."/>
            <person name="Hernando Y."/>
            <person name="Herrero E."/>
            <person name="Heumann K."/>
            <person name="Hiesel R."/>
            <person name="Hilger F."/>
            <person name="Hofmann B."/>
            <person name="Hollenberg C.P."/>
            <person name="Hughes B."/>
            <person name="Jauniaux J.-C."/>
            <person name="Kalogeropoulos A."/>
            <person name="Katsoulou C."/>
            <person name="Kordes E."/>
            <person name="Lafuente M.J."/>
            <person name="Landt O."/>
            <person name="Louis E.J."/>
            <person name="Maarse A.C."/>
            <person name="Madania A."/>
            <person name="Mannhaupt G."/>
            <person name="Marck C."/>
            <person name="Martin R.P."/>
            <person name="Mewes H.-W."/>
            <person name="Michaux G."/>
            <person name="Paces V."/>
            <person name="Parle-McDermott A.G."/>
            <person name="Pearson B.M."/>
            <person name="Perrin A."/>
            <person name="Pettersson B."/>
            <person name="Poch O."/>
            <person name="Pohl T.M."/>
            <person name="Poirey R."/>
            <person name="Portetelle D."/>
            <person name="Pujol A."/>
            <person name="Purnelle B."/>
            <person name="Ramezani Rad M."/>
            <person name="Rechmann S."/>
            <person name="Schwager C."/>
            <person name="Schweizer M."/>
            <person name="Sor F."/>
            <person name="Sterky F."/>
            <person name="Tarassov I.A."/>
            <person name="Teodoru C."/>
            <person name="Tettelin H."/>
            <person name="Thierry A."/>
            <person name="Tobiasch E."/>
            <person name="Tzermia M."/>
            <person name="Uhlen M."/>
            <person name="Unseld M."/>
            <person name="Valens M."/>
            <person name="Vandenbol M."/>
            <person name="Vetter I."/>
            <person name="Vlcek C."/>
            <person name="Voet M."/>
            <person name="Volckaert G."/>
            <person name="Voss H."/>
            <person name="Wambutt R."/>
            <person name="Wedler H."/>
            <person name="Wiemann S."/>
            <person name="Winsor B."/>
            <person name="Wolfe K.H."/>
            <person name="Zollner A."/>
            <person name="Zumstein E."/>
            <person name="Kleine K."/>
        </authorList>
    </citation>
    <scope>NUCLEOTIDE SEQUENCE [LARGE SCALE GENOMIC DNA]</scope>
    <source>
        <strain>ATCC 204508 / S288c</strain>
    </source>
</reference>
<reference key="2">
    <citation type="journal article" date="2014" name="G3 (Bethesda)">
        <title>The reference genome sequence of Saccharomyces cerevisiae: Then and now.</title>
        <authorList>
            <person name="Engel S.R."/>
            <person name="Dietrich F.S."/>
            <person name="Fisk D.G."/>
            <person name="Binkley G."/>
            <person name="Balakrishnan R."/>
            <person name="Costanzo M.C."/>
            <person name="Dwight S.S."/>
            <person name="Hitz B.C."/>
            <person name="Karra K."/>
            <person name="Nash R.S."/>
            <person name="Weng S."/>
            <person name="Wong E.D."/>
            <person name="Lloyd P."/>
            <person name="Skrzypek M.S."/>
            <person name="Miyasato S.R."/>
            <person name="Simison M."/>
            <person name="Cherry J.M."/>
        </authorList>
    </citation>
    <scope>GENOME REANNOTATION</scope>
    <source>
        <strain>ATCC 204508 / S288c</strain>
    </source>
</reference>
<reference key="3">
    <citation type="journal article" date="2003" name="Nature">
        <title>Global analysis of protein localization in budding yeast.</title>
        <authorList>
            <person name="Huh W.-K."/>
            <person name="Falvo J.V."/>
            <person name="Gerke L.C."/>
            <person name="Carroll A.S."/>
            <person name="Howson R.W."/>
            <person name="Weissman J.S."/>
            <person name="O'Shea E.K."/>
        </authorList>
    </citation>
    <scope>SUBCELLULAR LOCATION [LARGE SCALE ANALYSIS]</scope>
</reference>
<reference key="4">
    <citation type="journal article" date="2003" name="Nature">
        <title>Global analysis of protein expression in yeast.</title>
        <authorList>
            <person name="Ghaemmaghami S."/>
            <person name="Huh W.-K."/>
            <person name="Bower K."/>
            <person name="Howson R.W."/>
            <person name="Belle A."/>
            <person name="Dephoure N."/>
            <person name="O'Shea E.K."/>
            <person name="Weissman J.S."/>
        </authorList>
    </citation>
    <scope>LEVEL OF PROTEIN EXPRESSION [LARGE SCALE ANALYSIS]</scope>
</reference>
<reference key="5">
    <citation type="journal article" date="2004" name="Science">
        <title>Regulation of gene expression by a metabolic enzyme.</title>
        <authorList>
            <person name="Hall D.A."/>
            <person name="Zhu H."/>
            <person name="Zhu X."/>
            <person name="Royce T."/>
            <person name="Gerstein M."/>
            <person name="Snyder M."/>
        </authorList>
    </citation>
    <scope>INDUCTION</scope>
</reference>
<reference key="6">
    <citation type="journal article" date="2008" name="Mol. Cell. Proteomics">
        <title>A multidimensional chromatography technology for in-depth phosphoproteome analysis.</title>
        <authorList>
            <person name="Albuquerque C.P."/>
            <person name="Smolka M.B."/>
            <person name="Payne S.H."/>
            <person name="Bafna V."/>
            <person name="Eng J."/>
            <person name="Zhou H."/>
        </authorList>
    </citation>
    <scope>PHOSPHORYLATION [LARGE SCALE ANALYSIS] AT SER-342</scope>
    <scope>IDENTIFICATION BY MASS SPECTROMETRY [LARGE SCALE ANALYSIS]</scope>
</reference>
<reference key="7">
    <citation type="journal article" date="2009" name="Science">
        <title>Global analysis of Cdk1 substrate phosphorylation sites provides insights into evolution.</title>
        <authorList>
            <person name="Holt L.J."/>
            <person name="Tuch B.B."/>
            <person name="Villen J."/>
            <person name="Johnson A.D."/>
            <person name="Gygi S.P."/>
            <person name="Morgan D.O."/>
        </authorList>
    </citation>
    <scope>PHOSPHORYLATION [LARGE SCALE ANALYSIS] AT TYR-69; SER-105 AND SER-108</scope>
    <scope>IDENTIFICATION BY MASS SPECTROMETRY [LARGE SCALE ANALYSIS]</scope>
</reference>
<reference key="8">
    <citation type="journal article" date="2012" name="Proc. Natl. Acad. Sci. U.S.A.">
        <title>Tfb6, a previously unidentified subunit of the general transcription factor TFIIH, facilitates dissociation of Ssl2 helicase after transcription initiation.</title>
        <authorList>
            <person name="Murakami K."/>
            <person name="Gibbons B.J."/>
            <person name="Davis R.E."/>
            <person name="Nagai S."/>
            <person name="Liu X."/>
            <person name="Robinson P.J."/>
            <person name="Wu T."/>
            <person name="Kaplan C.D."/>
            <person name="Kornberg R.D."/>
        </authorList>
    </citation>
    <scope>IDENTIFICATION BY MASS SPECTROMETRY</scope>
    <scope>SUBUNIT</scope>
    <scope>INTERACTION WITH SSL2</scope>
    <scope>FUNCTION</scope>
    <scope>DISRUPTION PHENOTYPE</scope>
    <scope>PHOSPHORYLATION AT THR-71; THR-84; SER-104 AND SER-105</scope>
</reference>